<organism>
    <name type="scientific">Salmonella gallinarum (strain 287/91 / NCTC 13346)</name>
    <dbReference type="NCBI Taxonomy" id="550538"/>
    <lineage>
        <taxon>Bacteria</taxon>
        <taxon>Pseudomonadati</taxon>
        <taxon>Pseudomonadota</taxon>
        <taxon>Gammaproteobacteria</taxon>
        <taxon>Enterobacterales</taxon>
        <taxon>Enterobacteriaceae</taxon>
        <taxon>Salmonella</taxon>
    </lineage>
</organism>
<gene>
    <name evidence="1" type="primary">cmoA</name>
    <name type="ordered locus">SG1147</name>
</gene>
<feature type="chain" id="PRO_1000201364" description="Carboxy-S-adenosyl-L-methionine synthase">
    <location>
        <begin position="1"/>
        <end position="247"/>
    </location>
</feature>
<feature type="binding site" evidence="1">
    <location>
        <position position="39"/>
    </location>
    <ligand>
        <name>S-adenosyl-L-methionine</name>
        <dbReference type="ChEBI" id="CHEBI:59789"/>
    </ligand>
</feature>
<feature type="binding site" evidence="1">
    <location>
        <begin position="64"/>
        <end position="66"/>
    </location>
    <ligand>
        <name>S-adenosyl-L-methionine</name>
        <dbReference type="ChEBI" id="CHEBI:59789"/>
    </ligand>
</feature>
<feature type="binding site" evidence="1">
    <location>
        <begin position="89"/>
        <end position="90"/>
    </location>
    <ligand>
        <name>S-adenosyl-L-methionine</name>
        <dbReference type="ChEBI" id="CHEBI:59789"/>
    </ligand>
</feature>
<feature type="binding site" evidence="1">
    <location>
        <begin position="117"/>
        <end position="118"/>
    </location>
    <ligand>
        <name>S-adenosyl-L-methionine</name>
        <dbReference type="ChEBI" id="CHEBI:59789"/>
    </ligand>
</feature>
<feature type="binding site" evidence="1">
    <location>
        <position position="132"/>
    </location>
    <ligand>
        <name>S-adenosyl-L-methionine</name>
        <dbReference type="ChEBI" id="CHEBI:59789"/>
    </ligand>
</feature>
<feature type="binding site" evidence="1">
    <location>
        <position position="199"/>
    </location>
    <ligand>
        <name>S-adenosyl-L-methionine</name>
        <dbReference type="ChEBI" id="CHEBI:59789"/>
    </ligand>
</feature>
<comment type="function">
    <text evidence="1">Catalyzes the conversion of S-adenosyl-L-methionine (SAM) to carboxy-S-adenosyl-L-methionine (Cx-SAM).</text>
</comment>
<comment type="catalytic activity">
    <reaction evidence="1">
        <text>prephenate + S-adenosyl-L-methionine = carboxy-S-adenosyl-L-methionine + 3-phenylpyruvate + H2O</text>
        <dbReference type="Rhea" id="RHEA:51692"/>
        <dbReference type="ChEBI" id="CHEBI:15377"/>
        <dbReference type="ChEBI" id="CHEBI:18005"/>
        <dbReference type="ChEBI" id="CHEBI:29934"/>
        <dbReference type="ChEBI" id="CHEBI:59789"/>
        <dbReference type="ChEBI" id="CHEBI:134278"/>
    </reaction>
</comment>
<comment type="subunit">
    <text evidence="1">Homodimer.</text>
</comment>
<comment type="similarity">
    <text evidence="1">Belongs to the class I-like SAM-binding methyltransferase superfamily. Cx-SAM synthase family.</text>
</comment>
<reference key="1">
    <citation type="journal article" date="2008" name="Genome Res.">
        <title>Comparative genome analysis of Salmonella enteritidis PT4 and Salmonella gallinarum 287/91 provides insights into evolutionary and host adaptation pathways.</title>
        <authorList>
            <person name="Thomson N.R."/>
            <person name="Clayton D.J."/>
            <person name="Windhorst D."/>
            <person name="Vernikos G."/>
            <person name="Davidson S."/>
            <person name="Churcher C."/>
            <person name="Quail M.A."/>
            <person name="Stevens M."/>
            <person name="Jones M.A."/>
            <person name="Watson M."/>
            <person name="Barron A."/>
            <person name="Layton A."/>
            <person name="Pickard D."/>
            <person name="Kingsley R.A."/>
            <person name="Bignell A."/>
            <person name="Clark L."/>
            <person name="Harris B."/>
            <person name="Ormond D."/>
            <person name="Abdellah Z."/>
            <person name="Brooks K."/>
            <person name="Cherevach I."/>
            <person name="Chillingworth T."/>
            <person name="Woodward J."/>
            <person name="Norberczak H."/>
            <person name="Lord A."/>
            <person name="Arrowsmith C."/>
            <person name="Jagels K."/>
            <person name="Moule S."/>
            <person name="Mungall K."/>
            <person name="Saunders M."/>
            <person name="Whitehead S."/>
            <person name="Chabalgoity J.A."/>
            <person name="Maskell D."/>
            <person name="Humphreys T."/>
            <person name="Roberts M."/>
            <person name="Barrow P.A."/>
            <person name="Dougan G."/>
            <person name="Parkhill J."/>
        </authorList>
    </citation>
    <scope>NUCLEOTIDE SEQUENCE [LARGE SCALE GENOMIC DNA]</scope>
    <source>
        <strain>287/91 / NCTC 13346</strain>
    </source>
</reference>
<evidence type="ECO:0000255" key="1">
    <source>
        <dbReference type="HAMAP-Rule" id="MF_01589"/>
    </source>
</evidence>
<name>CMOA_SALG2</name>
<proteinExistence type="inferred from homology"/>
<keyword id="KW-0949">S-adenosyl-L-methionine</keyword>
<keyword id="KW-0808">Transferase</keyword>
<accession>B5R8D2</accession>
<protein>
    <recommendedName>
        <fullName evidence="1">Carboxy-S-adenosyl-L-methionine synthase</fullName>
        <shortName evidence="1">Cx-SAM synthase</shortName>
        <ecNumber evidence="1">2.1.3.-</ecNumber>
    </recommendedName>
</protein>
<sequence length="247" mass="27848">MSHRDTLFSAPIARLGDWTFDERVAEVFPDMIQRSVPGYSNIISMIGMLAERFVQPNTQVYDLGCSLGAATLSVRRNIRHEHCRIIAVDNSPAMIERCRRHIDAYKAPTPVEVVEGDIRDITIENASMVVLNFTLQFLEPAERQALLDKIYLGLNPGGALVLSEKFSFEDAKVGELLFNMHHDFKRANGYSELEISQKRSMLENVMLTDSVETHKARLRKAGFEHSELWFQCFNFGSLVALKAGVAA</sequence>
<dbReference type="EC" id="2.1.3.-" evidence="1"/>
<dbReference type="EMBL" id="AM933173">
    <property type="protein sequence ID" value="CAR37028.1"/>
    <property type="molecule type" value="Genomic_DNA"/>
</dbReference>
<dbReference type="RefSeq" id="WP_000019607.1">
    <property type="nucleotide sequence ID" value="NC_011274.1"/>
</dbReference>
<dbReference type="SMR" id="B5R8D2"/>
<dbReference type="KEGG" id="seg:SG1147"/>
<dbReference type="HOGENOM" id="CLU_078475_0_0_6"/>
<dbReference type="Proteomes" id="UP000008321">
    <property type="component" value="Chromosome"/>
</dbReference>
<dbReference type="GO" id="GO:0016743">
    <property type="term" value="F:carboxyl- or carbamoyltransferase activity"/>
    <property type="evidence" value="ECO:0007669"/>
    <property type="project" value="UniProtKB-UniRule"/>
</dbReference>
<dbReference type="GO" id="GO:1904047">
    <property type="term" value="F:S-adenosyl-L-methionine binding"/>
    <property type="evidence" value="ECO:0007669"/>
    <property type="project" value="UniProtKB-UniRule"/>
</dbReference>
<dbReference type="GO" id="GO:0002098">
    <property type="term" value="P:tRNA wobble uridine modification"/>
    <property type="evidence" value="ECO:0007669"/>
    <property type="project" value="InterPro"/>
</dbReference>
<dbReference type="CDD" id="cd02440">
    <property type="entry name" value="AdoMet_MTases"/>
    <property type="match status" value="1"/>
</dbReference>
<dbReference type="FunFam" id="3.40.50.150:FF:000030">
    <property type="entry name" value="Carboxy-S-adenosyl-L-methionine synthase"/>
    <property type="match status" value="1"/>
</dbReference>
<dbReference type="Gene3D" id="3.40.50.150">
    <property type="entry name" value="Vaccinia Virus protein VP39"/>
    <property type="match status" value="1"/>
</dbReference>
<dbReference type="HAMAP" id="MF_01589">
    <property type="entry name" value="Cx_SAM_synthase"/>
    <property type="match status" value="1"/>
</dbReference>
<dbReference type="InterPro" id="IPR005271">
    <property type="entry name" value="CmoA"/>
</dbReference>
<dbReference type="InterPro" id="IPR041698">
    <property type="entry name" value="Methyltransf_25"/>
</dbReference>
<dbReference type="InterPro" id="IPR029063">
    <property type="entry name" value="SAM-dependent_MTases_sf"/>
</dbReference>
<dbReference type="NCBIfam" id="TIGR00740">
    <property type="entry name" value="carboxy-S-adenosyl-L-methionine synthase CmoA"/>
    <property type="match status" value="1"/>
</dbReference>
<dbReference type="NCBIfam" id="NF011995">
    <property type="entry name" value="PRK15451.1"/>
    <property type="match status" value="1"/>
</dbReference>
<dbReference type="PANTHER" id="PTHR43861:SF2">
    <property type="entry name" value="CARBOXY-S-ADENOSYL-L-METHIONINE SYNTHASE"/>
    <property type="match status" value="1"/>
</dbReference>
<dbReference type="PANTHER" id="PTHR43861">
    <property type="entry name" value="TRANS-ACONITATE 2-METHYLTRANSFERASE-RELATED"/>
    <property type="match status" value="1"/>
</dbReference>
<dbReference type="Pfam" id="PF13649">
    <property type="entry name" value="Methyltransf_25"/>
    <property type="match status" value="1"/>
</dbReference>
<dbReference type="PIRSF" id="PIRSF006325">
    <property type="entry name" value="MeTrfase_bac"/>
    <property type="match status" value="1"/>
</dbReference>
<dbReference type="SUPFAM" id="SSF53335">
    <property type="entry name" value="S-adenosyl-L-methionine-dependent methyltransferases"/>
    <property type="match status" value="1"/>
</dbReference>